<accession>Q5RFT1</accession>
<comment type="function">
    <text evidence="1">Involved in the maintenance of mitochondrial membrane potential in pancreatic ductal adenocarcinoma (PDAC) cells. Promotes pancreatic ductal adenocarcinoma (PDAC) cell growth. May play a role as a nucleotide-sugar transporter (By similarity).</text>
</comment>
<comment type="subunit">
    <text evidence="1">Interacts with SLC25A5.</text>
</comment>
<comment type="subcellular location">
    <subcellularLocation>
        <location evidence="1">Mitochondrion</location>
    </subcellularLocation>
    <subcellularLocation>
        <location evidence="1">Lysosome membrane</location>
        <topology evidence="1">Multi-pass membrane protein</topology>
    </subcellularLocation>
</comment>
<comment type="similarity">
    <text evidence="5">Belongs to the SLC35F solute transporter family.</text>
</comment>
<proteinExistence type="evidence at transcript level"/>
<feature type="signal peptide" evidence="3">
    <location>
        <begin position="1"/>
        <end position="25"/>
    </location>
</feature>
<feature type="chain" id="PRO_0000232516" description="Solute carrier family 35 member F6">
    <location>
        <begin position="26"/>
        <end position="371"/>
    </location>
</feature>
<feature type="transmembrane region" description="Helical" evidence="3">
    <location>
        <begin position="48"/>
        <end position="68"/>
    </location>
</feature>
<feature type="transmembrane region" description="Helical" evidence="3">
    <location>
        <begin position="89"/>
        <end position="109"/>
    </location>
</feature>
<feature type="transmembrane region" description="Helical" evidence="3">
    <location>
        <begin position="117"/>
        <end position="137"/>
    </location>
</feature>
<feature type="transmembrane region" description="Helical" evidence="3">
    <location>
        <begin position="140"/>
        <end position="160"/>
    </location>
</feature>
<feature type="transmembrane region" description="Helical" evidence="3">
    <location>
        <begin position="176"/>
        <end position="196"/>
    </location>
</feature>
<feature type="transmembrane region" description="Helical" evidence="3">
    <location>
        <begin position="216"/>
        <end position="236"/>
    </location>
</feature>
<feature type="transmembrane region" description="Helical" evidence="3">
    <location>
        <begin position="261"/>
        <end position="281"/>
    </location>
</feature>
<feature type="transmembrane region" description="Helical" evidence="3">
    <location>
        <begin position="295"/>
        <end position="312"/>
    </location>
</feature>
<feature type="transmembrane region" description="Helical" evidence="3">
    <location>
        <begin position="317"/>
        <end position="336"/>
    </location>
</feature>
<feature type="domain" description="EamA">
    <location>
        <begin position="104"/>
        <end position="160"/>
    </location>
</feature>
<feature type="region of interest" description="Disordered" evidence="4">
    <location>
        <begin position="347"/>
        <end position="371"/>
    </location>
</feature>
<feature type="modified residue" description="Phosphothreonine" evidence="2">
    <location>
        <position position="365"/>
    </location>
</feature>
<feature type="glycosylation site" description="N-linked (GlcNAc...) asparagine" evidence="3">
    <location>
        <position position="110"/>
    </location>
</feature>
<reference key="1">
    <citation type="submission" date="2004-11" db="EMBL/GenBank/DDBJ databases">
        <authorList>
            <consortium name="The German cDNA consortium"/>
        </authorList>
    </citation>
    <scope>NUCLEOTIDE SEQUENCE [LARGE SCALE MRNA]</scope>
    <source>
        <tissue>Kidney</tissue>
    </source>
</reference>
<gene>
    <name type="primary">SLC35F6</name>
</gene>
<dbReference type="EMBL" id="CR857071">
    <property type="protein sequence ID" value="CAH89376.1"/>
    <property type="molecule type" value="mRNA"/>
</dbReference>
<dbReference type="RefSeq" id="NP_001124578.1">
    <property type="nucleotide sequence ID" value="NM_001131106.1"/>
</dbReference>
<dbReference type="SMR" id="Q5RFT1"/>
<dbReference type="STRING" id="9601.ENSPPYP00000014041"/>
<dbReference type="GlyCosmos" id="Q5RFT1">
    <property type="glycosylation" value="1 site, No reported glycans"/>
</dbReference>
<dbReference type="GeneID" id="100171413"/>
<dbReference type="KEGG" id="pon:100171413"/>
<dbReference type="CTD" id="54978"/>
<dbReference type="eggNOG" id="KOG3912">
    <property type="taxonomic scope" value="Eukaryota"/>
</dbReference>
<dbReference type="InParanoid" id="Q5RFT1"/>
<dbReference type="OrthoDB" id="29773at2759"/>
<dbReference type="Proteomes" id="UP000001595">
    <property type="component" value="Unplaced"/>
</dbReference>
<dbReference type="GO" id="GO:0005765">
    <property type="term" value="C:lysosomal membrane"/>
    <property type="evidence" value="ECO:0000250"/>
    <property type="project" value="UniProtKB"/>
</dbReference>
<dbReference type="GO" id="GO:0005739">
    <property type="term" value="C:mitochondrion"/>
    <property type="evidence" value="ECO:0000250"/>
    <property type="project" value="UniProtKB"/>
</dbReference>
<dbReference type="GO" id="GO:0022857">
    <property type="term" value="F:transmembrane transporter activity"/>
    <property type="evidence" value="ECO:0007669"/>
    <property type="project" value="InterPro"/>
</dbReference>
<dbReference type="GO" id="GO:1901029">
    <property type="term" value="P:negative regulation of mitochondrial outer membrane permeabilization involved in apoptotic signaling pathway"/>
    <property type="evidence" value="ECO:0000250"/>
    <property type="project" value="UniProtKB"/>
</dbReference>
<dbReference type="GO" id="GO:0008284">
    <property type="term" value="P:positive regulation of cell population proliferation"/>
    <property type="evidence" value="ECO:0000250"/>
    <property type="project" value="UniProtKB"/>
</dbReference>
<dbReference type="InterPro" id="IPR009262">
    <property type="entry name" value="SLC35_F1/F2/F6"/>
</dbReference>
<dbReference type="InterPro" id="IPR012404">
    <property type="entry name" value="UCP036436"/>
</dbReference>
<dbReference type="PANTHER" id="PTHR13146">
    <property type="match status" value="1"/>
</dbReference>
<dbReference type="PANTHER" id="PTHR13146:SF0">
    <property type="entry name" value="SOLUTE CARRIER FAMILY 35 MEMBER F6"/>
    <property type="match status" value="1"/>
</dbReference>
<dbReference type="Pfam" id="PF06027">
    <property type="entry name" value="SLC35F"/>
    <property type="match status" value="1"/>
</dbReference>
<dbReference type="PIRSF" id="PIRSF036436">
    <property type="entry name" value="UCP036436"/>
    <property type="match status" value="1"/>
</dbReference>
<dbReference type="SUPFAM" id="SSF103481">
    <property type="entry name" value="Multidrug resistance efflux transporter EmrE"/>
    <property type="match status" value="1"/>
</dbReference>
<organism>
    <name type="scientific">Pongo abelii</name>
    <name type="common">Sumatran orangutan</name>
    <name type="synonym">Pongo pygmaeus abelii</name>
    <dbReference type="NCBI Taxonomy" id="9601"/>
    <lineage>
        <taxon>Eukaryota</taxon>
        <taxon>Metazoa</taxon>
        <taxon>Chordata</taxon>
        <taxon>Craniata</taxon>
        <taxon>Vertebrata</taxon>
        <taxon>Euteleostomi</taxon>
        <taxon>Mammalia</taxon>
        <taxon>Eutheria</taxon>
        <taxon>Euarchontoglires</taxon>
        <taxon>Primates</taxon>
        <taxon>Haplorrhini</taxon>
        <taxon>Catarrhini</taxon>
        <taxon>Hominidae</taxon>
        <taxon>Pongo</taxon>
    </lineage>
</organism>
<protein>
    <recommendedName>
        <fullName>Solute carrier family 35 member F6</fullName>
    </recommendedName>
    <alternativeName>
        <fullName>ANT2-binding protein</fullName>
        <shortName>ANT2BP</shortName>
    </alternativeName>
    <alternativeName>
        <fullName>Transport and Golgi organization 9 homolog</fullName>
    </alternativeName>
</protein>
<keyword id="KW-0325">Glycoprotein</keyword>
<keyword id="KW-0458">Lysosome</keyword>
<keyword id="KW-0472">Membrane</keyword>
<keyword id="KW-0496">Mitochondrion</keyword>
<keyword id="KW-0597">Phosphoprotein</keyword>
<keyword id="KW-1185">Reference proteome</keyword>
<keyword id="KW-0732">Signal</keyword>
<keyword id="KW-0812">Transmembrane</keyword>
<keyword id="KW-1133">Transmembrane helix</keyword>
<keyword id="KW-0813">Transport</keyword>
<name>S35F6_PONAB</name>
<evidence type="ECO:0000250" key="1"/>
<evidence type="ECO:0000250" key="2">
    <source>
        <dbReference type="UniProtKB" id="Q8N357"/>
    </source>
</evidence>
<evidence type="ECO:0000255" key="3"/>
<evidence type="ECO:0000256" key="4">
    <source>
        <dbReference type="SAM" id="MobiDB-lite"/>
    </source>
</evidence>
<evidence type="ECO:0000305" key="5"/>
<sequence>MAWTKHQLFLAGLMLVTGSINTLSAKWADNFMAEGCGGSKEHSFQHPFLQAVGMFLGEFSCLAAFYLLRCRATGQSDSSVDPQQPFNPLLFLPPALCDMTGTSLMYVALNMTSASSFQMLRGAVIIFTGLFSVAFLGRRLVLSQWLGILATIAGLVVVGLADLLSKHDSQHKLSEVITGDLLIIMAQIIVAIQMVLEEKFVYKHNVHPLRAVGTEGLFGFVILSLLLVPMYYIPAGSFSGNPRGTLEDALDAFCQVGRQPLIAVALLGNISSIAFFNFAGISVTKELSATTRMVLDSLRTVVIWALSLALGWEAFHALQILGFLILLIGTALYNGLHRPLLGRLSRGRPPAEESEQERLLGGSRTPINDAS</sequence>